<evidence type="ECO:0000255" key="1">
    <source>
        <dbReference type="HAMAP-Rule" id="MF_00123"/>
    </source>
</evidence>
<proteinExistence type="inferred from homology"/>
<feature type="chain" id="PRO_0000242064" description="Arginine--tRNA ligase">
    <location>
        <begin position="1"/>
        <end position="576"/>
    </location>
</feature>
<feature type="short sequence motif" description="'HIGH' region">
    <location>
        <begin position="122"/>
        <end position="132"/>
    </location>
</feature>
<sequence>MNIQALINDKVSQALEAAGAPAGSPAAVRQSAKIQFGDYQANGVMGVAKKLGTNPREFAQKVIDVLDLDGIAEKVEIAGPGFINIFLDKSWLAARAEEALTDDRIGVAAEKQQNIVVDYSAPNVAKEMHVGHLRSTIIGDAVVRTLEFLGHNVVRANHIGDWGTQFGMLIANLERVQNETGEVSMELADLEGFYRESKKLYDEDEEFAVRARAFVVKLQSGDEYCAEMWKKLVDVTMVQNQINYDRLNVSLTRDNVMGESMYNYMLPGIVADLKEKGLAVESDGAQVVFLDEYKNKDGDPMGVIIQKRDGGFLYTTTDIACAKYRFEQLNADRVLYFIDSRQHQHLMQAWSIVRKAGYVPEEVTLEHHAFGMMLGKDGRPFKTRAGGTVRLADLLDESEVRAAKLIEAKNPDLDTAEKDKIAKTVAMAAVKYADLSKHRTTDYIFDWDNMLAFEGNTAPYMQYAYTRVASIFKRADVNLADLTHPIVINDEKEQALLSTLLQFEEAVLNVSREGQPHLMCTYLFELAGKFSSFYEACPILNAEEAVKQSRLKLALLTAKTIKQGLDLLGIETLERM</sequence>
<organism>
    <name type="scientific">Photobacterium profundum (strain SS9)</name>
    <dbReference type="NCBI Taxonomy" id="298386"/>
    <lineage>
        <taxon>Bacteria</taxon>
        <taxon>Pseudomonadati</taxon>
        <taxon>Pseudomonadota</taxon>
        <taxon>Gammaproteobacteria</taxon>
        <taxon>Vibrionales</taxon>
        <taxon>Vibrionaceae</taxon>
        <taxon>Photobacterium</taxon>
    </lineage>
</organism>
<comment type="catalytic activity">
    <reaction evidence="1">
        <text>tRNA(Arg) + L-arginine + ATP = L-arginyl-tRNA(Arg) + AMP + diphosphate</text>
        <dbReference type="Rhea" id="RHEA:20301"/>
        <dbReference type="Rhea" id="RHEA-COMP:9658"/>
        <dbReference type="Rhea" id="RHEA-COMP:9673"/>
        <dbReference type="ChEBI" id="CHEBI:30616"/>
        <dbReference type="ChEBI" id="CHEBI:32682"/>
        <dbReference type="ChEBI" id="CHEBI:33019"/>
        <dbReference type="ChEBI" id="CHEBI:78442"/>
        <dbReference type="ChEBI" id="CHEBI:78513"/>
        <dbReference type="ChEBI" id="CHEBI:456215"/>
        <dbReference type="EC" id="6.1.1.19"/>
    </reaction>
</comment>
<comment type="subunit">
    <text evidence="1">Monomer.</text>
</comment>
<comment type="subcellular location">
    <subcellularLocation>
        <location evidence="1">Cytoplasm</location>
    </subcellularLocation>
</comment>
<comment type="similarity">
    <text evidence="1">Belongs to the class-I aminoacyl-tRNA synthetase family.</text>
</comment>
<accession>Q6LTA1</accession>
<reference key="1">
    <citation type="journal article" date="2005" name="Science">
        <title>Life at depth: Photobacterium profundum genome sequence and expression analysis.</title>
        <authorList>
            <person name="Vezzi A."/>
            <person name="Campanaro S."/>
            <person name="D'Angelo M."/>
            <person name="Simonato F."/>
            <person name="Vitulo N."/>
            <person name="Lauro F.M."/>
            <person name="Cestaro A."/>
            <person name="Malacrida G."/>
            <person name="Simionati B."/>
            <person name="Cannata N."/>
            <person name="Romualdi C."/>
            <person name="Bartlett D.H."/>
            <person name="Valle G."/>
        </authorList>
    </citation>
    <scope>NUCLEOTIDE SEQUENCE [LARGE SCALE GENOMIC DNA]</scope>
    <source>
        <strain>ATCC BAA-1253 / SS9</strain>
    </source>
</reference>
<dbReference type="EC" id="6.1.1.19" evidence="1"/>
<dbReference type="EMBL" id="CR378666">
    <property type="protein sequence ID" value="CAG19475.1"/>
    <property type="molecule type" value="Genomic_DNA"/>
</dbReference>
<dbReference type="RefSeq" id="WP_011217808.1">
    <property type="nucleotide sequence ID" value="NC_006370.1"/>
</dbReference>
<dbReference type="SMR" id="Q6LTA1"/>
<dbReference type="STRING" id="298386.PBPRA1064"/>
<dbReference type="KEGG" id="ppr:PBPRA1064"/>
<dbReference type="eggNOG" id="COG0018">
    <property type="taxonomic scope" value="Bacteria"/>
</dbReference>
<dbReference type="HOGENOM" id="CLU_006406_5_1_6"/>
<dbReference type="Proteomes" id="UP000000593">
    <property type="component" value="Chromosome 1"/>
</dbReference>
<dbReference type="GO" id="GO:0005737">
    <property type="term" value="C:cytoplasm"/>
    <property type="evidence" value="ECO:0007669"/>
    <property type="project" value="UniProtKB-SubCell"/>
</dbReference>
<dbReference type="GO" id="GO:0004814">
    <property type="term" value="F:arginine-tRNA ligase activity"/>
    <property type="evidence" value="ECO:0007669"/>
    <property type="project" value="UniProtKB-UniRule"/>
</dbReference>
<dbReference type="GO" id="GO:0005524">
    <property type="term" value="F:ATP binding"/>
    <property type="evidence" value="ECO:0007669"/>
    <property type="project" value="UniProtKB-UniRule"/>
</dbReference>
<dbReference type="GO" id="GO:0006420">
    <property type="term" value="P:arginyl-tRNA aminoacylation"/>
    <property type="evidence" value="ECO:0007669"/>
    <property type="project" value="UniProtKB-UniRule"/>
</dbReference>
<dbReference type="CDD" id="cd07956">
    <property type="entry name" value="Anticodon_Ia_Arg"/>
    <property type="match status" value="1"/>
</dbReference>
<dbReference type="CDD" id="cd00671">
    <property type="entry name" value="ArgRS_core"/>
    <property type="match status" value="1"/>
</dbReference>
<dbReference type="FunFam" id="1.10.730.10:FF:000001">
    <property type="entry name" value="Arginine--tRNA ligase"/>
    <property type="match status" value="1"/>
</dbReference>
<dbReference type="FunFam" id="3.40.50.620:FF:000030">
    <property type="entry name" value="Arginine--tRNA ligase"/>
    <property type="match status" value="1"/>
</dbReference>
<dbReference type="Gene3D" id="3.30.1360.70">
    <property type="entry name" value="Arginyl tRNA synthetase N-terminal domain"/>
    <property type="match status" value="1"/>
</dbReference>
<dbReference type="Gene3D" id="3.40.50.620">
    <property type="entry name" value="HUPs"/>
    <property type="match status" value="1"/>
</dbReference>
<dbReference type="Gene3D" id="1.10.730.10">
    <property type="entry name" value="Isoleucyl-tRNA Synthetase, Domain 1"/>
    <property type="match status" value="1"/>
</dbReference>
<dbReference type="HAMAP" id="MF_00123">
    <property type="entry name" value="Arg_tRNA_synth"/>
    <property type="match status" value="1"/>
</dbReference>
<dbReference type="InterPro" id="IPR001412">
    <property type="entry name" value="aa-tRNA-synth_I_CS"/>
</dbReference>
<dbReference type="InterPro" id="IPR001278">
    <property type="entry name" value="Arg-tRNA-ligase"/>
</dbReference>
<dbReference type="InterPro" id="IPR005148">
    <property type="entry name" value="Arg-tRNA-synth_N"/>
</dbReference>
<dbReference type="InterPro" id="IPR036695">
    <property type="entry name" value="Arg-tRNA-synth_N_sf"/>
</dbReference>
<dbReference type="InterPro" id="IPR035684">
    <property type="entry name" value="ArgRS_core"/>
</dbReference>
<dbReference type="InterPro" id="IPR008909">
    <property type="entry name" value="DALR_anticod-bd"/>
</dbReference>
<dbReference type="InterPro" id="IPR014729">
    <property type="entry name" value="Rossmann-like_a/b/a_fold"/>
</dbReference>
<dbReference type="InterPro" id="IPR009080">
    <property type="entry name" value="tRNAsynth_Ia_anticodon-bd"/>
</dbReference>
<dbReference type="NCBIfam" id="TIGR00456">
    <property type="entry name" value="argS"/>
    <property type="match status" value="1"/>
</dbReference>
<dbReference type="PANTHER" id="PTHR11956:SF5">
    <property type="entry name" value="ARGININE--TRNA LIGASE, CYTOPLASMIC"/>
    <property type="match status" value="1"/>
</dbReference>
<dbReference type="PANTHER" id="PTHR11956">
    <property type="entry name" value="ARGINYL-TRNA SYNTHETASE"/>
    <property type="match status" value="1"/>
</dbReference>
<dbReference type="Pfam" id="PF03485">
    <property type="entry name" value="Arg_tRNA_synt_N"/>
    <property type="match status" value="1"/>
</dbReference>
<dbReference type="Pfam" id="PF05746">
    <property type="entry name" value="DALR_1"/>
    <property type="match status" value="1"/>
</dbReference>
<dbReference type="Pfam" id="PF00750">
    <property type="entry name" value="tRNA-synt_1d"/>
    <property type="match status" value="1"/>
</dbReference>
<dbReference type="PRINTS" id="PR01038">
    <property type="entry name" value="TRNASYNTHARG"/>
</dbReference>
<dbReference type="SMART" id="SM01016">
    <property type="entry name" value="Arg_tRNA_synt_N"/>
    <property type="match status" value="1"/>
</dbReference>
<dbReference type="SMART" id="SM00836">
    <property type="entry name" value="DALR_1"/>
    <property type="match status" value="1"/>
</dbReference>
<dbReference type="SUPFAM" id="SSF47323">
    <property type="entry name" value="Anticodon-binding domain of a subclass of class I aminoacyl-tRNA synthetases"/>
    <property type="match status" value="1"/>
</dbReference>
<dbReference type="SUPFAM" id="SSF55190">
    <property type="entry name" value="Arginyl-tRNA synthetase (ArgRS), N-terminal 'additional' domain"/>
    <property type="match status" value="1"/>
</dbReference>
<dbReference type="SUPFAM" id="SSF52374">
    <property type="entry name" value="Nucleotidylyl transferase"/>
    <property type="match status" value="1"/>
</dbReference>
<dbReference type="PROSITE" id="PS00178">
    <property type="entry name" value="AA_TRNA_LIGASE_I"/>
    <property type="match status" value="1"/>
</dbReference>
<gene>
    <name evidence="1" type="primary">argS</name>
    <name type="ordered locus">PBPRA1064</name>
</gene>
<name>SYR_PHOPR</name>
<protein>
    <recommendedName>
        <fullName evidence="1">Arginine--tRNA ligase</fullName>
        <ecNumber evidence="1">6.1.1.19</ecNumber>
    </recommendedName>
    <alternativeName>
        <fullName evidence="1">Arginyl-tRNA synthetase</fullName>
        <shortName evidence="1">ArgRS</shortName>
    </alternativeName>
</protein>
<keyword id="KW-0030">Aminoacyl-tRNA synthetase</keyword>
<keyword id="KW-0067">ATP-binding</keyword>
<keyword id="KW-0963">Cytoplasm</keyword>
<keyword id="KW-0436">Ligase</keyword>
<keyword id="KW-0547">Nucleotide-binding</keyword>
<keyword id="KW-0648">Protein biosynthesis</keyword>
<keyword id="KW-1185">Reference proteome</keyword>